<keyword id="KW-0046">Antibiotic resistance</keyword>
<keyword id="KW-0997">Cell inner membrane</keyword>
<keyword id="KW-1003">Cell membrane</keyword>
<keyword id="KW-0472">Membrane</keyword>
<keyword id="KW-1185">Reference proteome</keyword>
<keyword id="KW-0812">Transmembrane</keyword>
<keyword id="KW-1133">Transmembrane helix</keyword>
<keyword id="KW-0813">Transport</keyword>
<organism>
    <name type="scientific">Escherichia coli O6:H1 (strain CFT073 / ATCC 700928 / UPEC)</name>
    <dbReference type="NCBI Taxonomy" id="199310"/>
    <lineage>
        <taxon>Bacteria</taxon>
        <taxon>Pseudomonadati</taxon>
        <taxon>Pseudomonadota</taxon>
        <taxon>Gammaproteobacteria</taxon>
        <taxon>Enterobacterales</taxon>
        <taxon>Enterobacteriaceae</taxon>
        <taxon>Escherichia</taxon>
    </lineage>
</organism>
<evidence type="ECO:0000255" key="1">
    <source>
        <dbReference type="HAMAP-Rule" id="MF_01529"/>
    </source>
</evidence>
<evidence type="ECO:0000305" key="2"/>
<sequence>MSRVSQARNLGKYFLLIDNMLVVLGFFVVFPLISIRFVDQMGWAAVMVGIALGLRQFIQQGLGIFGGAIADRFGAKPMIVTGMLMRAAGFATMGIAHEPWLLWFSCLLSGLGGTLFDPPRSALVVKLIRPQQRGRFFSLLMMQDSAGAVIGALLGSWLLQYDFRLVCATGAVLFVLCAAFNAWLLPAWKLSTVRTPVREGMTRVMRDKRFVTYVLTLAGYYMLAVQVMLMLPIMVNDVAGAPSAVKWMYAIEACLSLTLLYPIARWSEKHFRLEHRLMAGLLIMSLSMMPVGMVSGLQQLFTLICLFYIGSIIAEPARETLSASLADARARGSYMGFSRLGLAIGGAIGYIGGGWLFDLGKSAHQPELPWMMLGIIGIFTFLALGWQFSQKRAARRLLERDA</sequence>
<dbReference type="EMBL" id="AE014075">
    <property type="protein sequence ID" value="AAN79805.1"/>
    <property type="status" value="ALT_INIT"/>
    <property type="molecule type" value="Genomic_DNA"/>
</dbReference>
<dbReference type="RefSeq" id="WP_000092206.1">
    <property type="nucleotide sequence ID" value="NZ_CP051263.1"/>
</dbReference>
<dbReference type="SMR" id="P69368"/>
<dbReference type="STRING" id="199310.c1332"/>
<dbReference type="GeneID" id="75203652"/>
<dbReference type="KEGG" id="ecc:c1332"/>
<dbReference type="eggNOG" id="COG0477">
    <property type="taxonomic scope" value="Bacteria"/>
</dbReference>
<dbReference type="HOGENOM" id="CLU_001265_60_2_6"/>
<dbReference type="Proteomes" id="UP000001410">
    <property type="component" value="Chromosome"/>
</dbReference>
<dbReference type="GO" id="GO:0005886">
    <property type="term" value="C:plasma membrane"/>
    <property type="evidence" value="ECO:0007669"/>
    <property type="project" value="UniProtKB-SubCell"/>
</dbReference>
<dbReference type="GO" id="GO:0022857">
    <property type="term" value="F:transmembrane transporter activity"/>
    <property type="evidence" value="ECO:0007669"/>
    <property type="project" value="UniProtKB-UniRule"/>
</dbReference>
<dbReference type="GO" id="GO:0046677">
    <property type="term" value="P:response to antibiotic"/>
    <property type="evidence" value="ECO:0007669"/>
    <property type="project" value="UniProtKB-KW"/>
</dbReference>
<dbReference type="CDD" id="cd17329">
    <property type="entry name" value="MFS_MdtH_MDR_like"/>
    <property type="match status" value="1"/>
</dbReference>
<dbReference type="FunFam" id="1.20.1250.20:FF:000039">
    <property type="entry name" value="Multidrug resistance protein MdtH"/>
    <property type="match status" value="1"/>
</dbReference>
<dbReference type="Gene3D" id="1.20.1250.20">
    <property type="entry name" value="MFS general substrate transporter like domains"/>
    <property type="match status" value="1"/>
</dbReference>
<dbReference type="HAMAP" id="MF_01529">
    <property type="entry name" value="MFS_MdtH"/>
    <property type="match status" value="1"/>
</dbReference>
<dbReference type="InterPro" id="IPR011701">
    <property type="entry name" value="MFS"/>
</dbReference>
<dbReference type="InterPro" id="IPR020846">
    <property type="entry name" value="MFS_dom"/>
</dbReference>
<dbReference type="InterPro" id="IPR036259">
    <property type="entry name" value="MFS_trans_sf"/>
</dbReference>
<dbReference type="InterPro" id="IPR050171">
    <property type="entry name" value="MFS_Transporters"/>
</dbReference>
<dbReference type="InterPro" id="IPR022855">
    <property type="entry name" value="Multidrug-R_MdtH"/>
</dbReference>
<dbReference type="NCBIfam" id="NF008650">
    <property type="entry name" value="PRK11646.1"/>
    <property type="match status" value="1"/>
</dbReference>
<dbReference type="PANTHER" id="PTHR23517:SF2">
    <property type="entry name" value="MULTIDRUG RESISTANCE PROTEIN MDTH"/>
    <property type="match status" value="1"/>
</dbReference>
<dbReference type="PANTHER" id="PTHR23517">
    <property type="entry name" value="RESISTANCE PROTEIN MDTM, PUTATIVE-RELATED-RELATED"/>
    <property type="match status" value="1"/>
</dbReference>
<dbReference type="Pfam" id="PF07690">
    <property type="entry name" value="MFS_1"/>
    <property type="match status" value="1"/>
</dbReference>
<dbReference type="SUPFAM" id="SSF103473">
    <property type="entry name" value="MFS general substrate transporter"/>
    <property type="match status" value="1"/>
</dbReference>
<dbReference type="PROSITE" id="PS50850">
    <property type="entry name" value="MFS"/>
    <property type="match status" value="1"/>
</dbReference>
<gene>
    <name evidence="1" type="primary">mdtH</name>
    <name type="ordered locus">c1332</name>
</gene>
<feature type="chain" id="PRO_0000173344" description="Multidrug resistance protein MdtH">
    <location>
        <begin position="1"/>
        <end position="402"/>
    </location>
</feature>
<feature type="topological domain" description="Cytoplasmic" evidence="1">
    <location>
        <begin position="1"/>
        <end position="12"/>
    </location>
</feature>
<feature type="transmembrane region" description="Helical" evidence="1">
    <location>
        <begin position="13"/>
        <end position="33"/>
    </location>
</feature>
<feature type="topological domain" description="Periplasmic" evidence="1">
    <location>
        <begin position="34"/>
        <end position="98"/>
    </location>
</feature>
<feature type="transmembrane region" description="Helical" evidence="1">
    <location>
        <begin position="99"/>
        <end position="116"/>
    </location>
</feature>
<feature type="topological domain" description="Cytoplasmic" evidence="1">
    <location>
        <begin position="117"/>
        <end position="138"/>
    </location>
</feature>
<feature type="transmembrane region" description="Helical" evidence="1">
    <location>
        <begin position="139"/>
        <end position="159"/>
    </location>
</feature>
<feature type="topological domain" description="Periplasmic" evidence="1">
    <location>
        <begin position="160"/>
        <end position="164"/>
    </location>
</feature>
<feature type="transmembrane region" description="Helical" evidence="1">
    <location>
        <begin position="165"/>
        <end position="185"/>
    </location>
</feature>
<feature type="topological domain" description="Cytoplasmic" evidence="1">
    <location>
        <begin position="186"/>
        <end position="213"/>
    </location>
</feature>
<feature type="transmembrane region" description="Helical" evidence="1">
    <location>
        <begin position="214"/>
        <end position="234"/>
    </location>
</feature>
<feature type="topological domain" description="Periplasmic" evidence="1">
    <location>
        <begin position="235"/>
        <end position="243"/>
    </location>
</feature>
<feature type="transmembrane region" description="Helical" evidence="1">
    <location>
        <begin position="244"/>
        <end position="264"/>
    </location>
</feature>
<feature type="topological domain" description="Cytoplasmic" evidence="1">
    <location>
        <begin position="265"/>
        <end position="276"/>
    </location>
</feature>
<feature type="transmembrane region" description="Helical" evidence="1">
    <location>
        <begin position="277"/>
        <end position="297"/>
    </location>
</feature>
<feature type="topological domain" description="Periplasmic" evidence="1">
    <location>
        <begin position="298"/>
        <end position="299"/>
    </location>
</feature>
<feature type="transmembrane region" description="Helical" evidence="1">
    <location>
        <begin position="300"/>
        <end position="320"/>
    </location>
</feature>
<feature type="topological domain" description="Cytoplasmic" evidence="1">
    <location>
        <begin position="321"/>
        <end position="339"/>
    </location>
</feature>
<feature type="transmembrane region" description="Helical" evidence="1">
    <location>
        <begin position="340"/>
        <end position="360"/>
    </location>
</feature>
<feature type="topological domain" description="Periplasmic" evidence="1">
    <location>
        <begin position="361"/>
        <end position="367"/>
    </location>
</feature>
<feature type="transmembrane region" description="Helical" evidence="1">
    <location>
        <begin position="368"/>
        <end position="388"/>
    </location>
</feature>
<feature type="topological domain" description="Cytoplasmic" evidence="1">
    <location>
        <begin position="389"/>
        <end position="402"/>
    </location>
</feature>
<comment type="function">
    <text evidence="1">Confers resistance to norfloxacin and enoxacin.</text>
</comment>
<comment type="subcellular location">
    <subcellularLocation>
        <location evidence="1">Cell inner membrane</location>
        <topology evidence="1">Multi-pass membrane protein</topology>
    </subcellularLocation>
</comment>
<comment type="similarity">
    <text evidence="1">Belongs to the major facilitator superfamily. DHA1 family. MdtH (TC 2.A.1.2.21) subfamily.</text>
</comment>
<comment type="sequence caution" evidence="2">
    <conflict type="erroneous initiation">
        <sequence resource="EMBL-CDS" id="AAN79805"/>
    </conflict>
</comment>
<name>MDTH_ECOL6</name>
<protein>
    <recommendedName>
        <fullName evidence="1">Multidrug resistance protein MdtH</fullName>
    </recommendedName>
</protein>
<proteinExistence type="inferred from homology"/>
<accession>P69368</accession>
<accession>P75929</accession>
<accession>P77042</accession>
<accession>Q9R7P2</accession>
<reference key="1">
    <citation type="journal article" date="2002" name="Proc. Natl. Acad. Sci. U.S.A.">
        <title>Extensive mosaic structure revealed by the complete genome sequence of uropathogenic Escherichia coli.</title>
        <authorList>
            <person name="Welch R.A."/>
            <person name="Burland V."/>
            <person name="Plunkett G. III"/>
            <person name="Redford P."/>
            <person name="Roesch P."/>
            <person name="Rasko D."/>
            <person name="Buckles E.L."/>
            <person name="Liou S.-R."/>
            <person name="Boutin A."/>
            <person name="Hackett J."/>
            <person name="Stroud D."/>
            <person name="Mayhew G.F."/>
            <person name="Rose D.J."/>
            <person name="Zhou S."/>
            <person name="Schwartz D.C."/>
            <person name="Perna N.T."/>
            <person name="Mobley H.L.T."/>
            <person name="Donnenberg M.S."/>
            <person name="Blattner F.R."/>
        </authorList>
    </citation>
    <scope>NUCLEOTIDE SEQUENCE [LARGE SCALE GENOMIC DNA]</scope>
    <source>
        <strain>CFT073 / ATCC 700928 / UPEC</strain>
    </source>
</reference>